<feature type="chain" id="PRO_0000330925" description="JmjC domain-containing protein C">
    <location>
        <begin position="1"/>
        <end position="415"/>
    </location>
</feature>
<feature type="domain" description="JmjC" evidence="1">
    <location>
        <begin position="127"/>
        <end position="302"/>
    </location>
</feature>
<feature type="region of interest" description="Disordered" evidence="2">
    <location>
        <begin position="97"/>
        <end position="140"/>
    </location>
</feature>
<feature type="compositionally biased region" description="Low complexity" evidence="2">
    <location>
        <begin position="104"/>
        <end position="137"/>
    </location>
</feature>
<proteinExistence type="predicted"/>
<protein>
    <recommendedName>
        <fullName>JmjC domain-containing protein C</fullName>
    </recommendedName>
    <alternativeName>
        <fullName>Jumonji domain-containing protein C</fullName>
    </alternativeName>
</protein>
<accession>Q54LV7</accession>
<name>JMJCC_DICDI</name>
<reference key="1">
    <citation type="journal article" date="2005" name="Nature">
        <title>The genome of the social amoeba Dictyostelium discoideum.</title>
        <authorList>
            <person name="Eichinger L."/>
            <person name="Pachebat J.A."/>
            <person name="Gloeckner G."/>
            <person name="Rajandream M.A."/>
            <person name="Sucgang R."/>
            <person name="Berriman M."/>
            <person name="Song J."/>
            <person name="Olsen R."/>
            <person name="Szafranski K."/>
            <person name="Xu Q."/>
            <person name="Tunggal B."/>
            <person name="Kummerfeld S."/>
            <person name="Madera M."/>
            <person name="Konfortov B.A."/>
            <person name="Rivero F."/>
            <person name="Bankier A.T."/>
            <person name="Lehmann R."/>
            <person name="Hamlin N."/>
            <person name="Davies R."/>
            <person name="Gaudet P."/>
            <person name="Fey P."/>
            <person name="Pilcher K."/>
            <person name="Chen G."/>
            <person name="Saunders D."/>
            <person name="Sodergren E.J."/>
            <person name="Davis P."/>
            <person name="Kerhornou A."/>
            <person name="Nie X."/>
            <person name="Hall N."/>
            <person name="Anjard C."/>
            <person name="Hemphill L."/>
            <person name="Bason N."/>
            <person name="Farbrother P."/>
            <person name="Desany B."/>
            <person name="Just E."/>
            <person name="Morio T."/>
            <person name="Rost R."/>
            <person name="Churcher C.M."/>
            <person name="Cooper J."/>
            <person name="Haydock S."/>
            <person name="van Driessche N."/>
            <person name="Cronin A."/>
            <person name="Goodhead I."/>
            <person name="Muzny D.M."/>
            <person name="Mourier T."/>
            <person name="Pain A."/>
            <person name="Lu M."/>
            <person name="Harper D."/>
            <person name="Lindsay R."/>
            <person name="Hauser H."/>
            <person name="James K.D."/>
            <person name="Quiles M."/>
            <person name="Madan Babu M."/>
            <person name="Saito T."/>
            <person name="Buchrieser C."/>
            <person name="Wardroper A."/>
            <person name="Felder M."/>
            <person name="Thangavelu M."/>
            <person name="Johnson D."/>
            <person name="Knights A."/>
            <person name="Loulseged H."/>
            <person name="Mungall K.L."/>
            <person name="Oliver K."/>
            <person name="Price C."/>
            <person name="Quail M.A."/>
            <person name="Urushihara H."/>
            <person name="Hernandez J."/>
            <person name="Rabbinowitsch E."/>
            <person name="Steffen D."/>
            <person name="Sanders M."/>
            <person name="Ma J."/>
            <person name="Kohara Y."/>
            <person name="Sharp S."/>
            <person name="Simmonds M.N."/>
            <person name="Spiegler S."/>
            <person name="Tivey A."/>
            <person name="Sugano S."/>
            <person name="White B."/>
            <person name="Walker D."/>
            <person name="Woodward J.R."/>
            <person name="Winckler T."/>
            <person name="Tanaka Y."/>
            <person name="Shaulsky G."/>
            <person name="Schleicher M."/>
            <person name="Weinstock G.M."/>
            <person name="Rosenthal A."/>
            <person name="Cox E.C."/>
            <person name="Chisholm R.L."/>
            <person name="Gibbs R.A."/>
            <person name="Loomis W.F."/>
            <person name="Platzer M."/>
            <person name="Kay R.R."/>
            <person name="Williams J.G."/>
            <person name="Dear P.H."/>
            <person name="Noegel A.A."/>
            <person name="Barrell B.G."/>
            <person name="Kuspa A."/>
        </authorList>
    </citation>
    <scope>NUCLEOTIDE SEQUENCE [LARGE SCALE GENOMIC DNA]</scope>
    <source>
        <strain>AX4</strain>
    </source>
</reference>
<organism>
    <name type="scientific">Dictyostelium discoideum</name>
    <name type="common">Social amoeba</name>
    <dbReference type="NCBI Taxonomy" id="44689"/>
    <lineage>
        <taxon>Eukaryota</taxon>
        <taxon>Amoebozoa</taxon>
        <taxon>Evosea</taxon>
        <taxon>Eumycetozoa</taxon>
        <taxon>Dictyostelia</taxon>
        <taxon>Dictyosteliales</taxon>
        <taxon>Dictyosteliaceae</taxon>
        <taxon>Dictyostelium</taxon>
    </lineage>
</organism>
<gene>
    <name type="primary">jcdC</name>
    <name type="ORF">DDB_G0286391</name>
</gene>
<dbReference type="EMBL" id="AAFI02000085">
    <property type="protein sequence ID" value="EAL64220.2"/>
    <property type="molecule type" value="Genomic_DNA"/>
</dbReference>
<dbReference type="RefSeq" id="XP_637723.2">
    <property type="nucleotide sequence ID" value="XM_632631.2"/>
</dbReference>
<dbReference type="SMR" id="Q54LV7"/>
<dbReference type="PaxDb" id="44689-DDB0238367"/>
<dbReference type="EnsemblProtists" id="EAL64220">
    <property type="protein sequence ID" value="EAL64220"/>
    <property type="gene ID" value="DDB_G0286391"/>
</dbReference>
<dbReference type="GeneID" id="8625588"/>
<dbReference type="KEGG" id="ddi:DDB_G0286391"/>
<dbReference type="dictyBase" id="DDB_G0286391">
    <property type="gene designation" value="jcdC"/>
</dbReference>
<dbReference type="VEuPathDB" id="AmoebaDB:DDB_G0286391"/>
<dbReference type="eggNOG" id="KOG2132">
    <property type="taxonomic scope" value="Eukaryota"/>
</dbReference>
<dbReference type="HOGENOM" id="CLU_662957_0_0_1"/>
<dbReference type="InParanoid" id="Q54LV7"/>
<dbReference type="OMA" id="NLWIGFK"/>
<dbReference type="PhylomeDB" id="Q54LV7"/>
<dbReference type="PRO" id="PR:Q54LV7"/>
<dbReference type="Proteomes" id="UP000002195">
    <property type="component" value="Chromosome 4"/>
</dbReference>
<dbReference type="GO" id="GO:0016706">
    <property type="term" value="F:2-oxoglutarate-dependent dioxygenase activity"/>
    <property type="evidence" value="ECO:0000318"/>
    <property type="project" value="GO_Central"/>
</dbReference>
<dbReference type="Gene3D" id="2.60.120.650">
    <property type="entry name" value="Cupin"/>
    <property type="match status" value="1"/>
</dbReference>
<dbReference type="InterPro" id="IPR041667">
    <property type="entry name" value="Cupin_8"/>
</dbReference>
<dbReference type="InterPro" id="IPR003347">
    <property type="entry name" value="JmjC_dom"/>
</dbReference>
<dbReference type="PANTHER" id="PTHR12461">
    <property type="entry name" value="HYPOXIA-INDUCIBLE FACTOR 1 ALPHA INHIBITOR-RELATED"/>
    <property type="match status" value="1"/>
</dbReference>
<dbReference type="PANTHER" id="PTHR12461:SF81">
    <property type="entry name" value="JMJC DOMAIN-CONTAINING PROTEIN C"/>
    <property type="match status" value="1"/>
</dbReference>
<dbReference type="Pfam" id="PF13621">
    <property type="entry name" value="Cupin_8"/>
    <property type="match status" value="1"/>
</dbReference>
<dbReference type="SUPFAM" id="SSF51197">
    <property type="entry name" value="Clavaminate synthase-like"/>
    <property type="match status" value="1"/>
</dbReference>
<dbReference type="PROSITE" id="PS51184">
    <property type="entry name" value="JMJC"/>
    <property type="match status" value="1"/>
</dbReference>
<sequence>MNIDRIDKPTREQYEEYILKNQPFIITGVVNNWISFNKKWIPSQNIEDDYFLSILENKGIPVREIGIDVGEWLGKTKNINFSIFWKKWREHYFNFKNEKNNQSNNNNNNNNNNNNNNNNNNNNNNNNNNNNNNNNNNKPKYYLASLPIQTYFKELINDFEIPEIPKEQNKNGNLWIGFKDQITPLHHDWSSGDPGMDGLHAIIIGRKQFKLFDPIVNVNCFKRKKEWGKFHQSEFDLDNPDFNKFPEAKNFKIIEIQLNQGEMLFIPKLWWHHVKTLEPSISINFWFQHIGSELLKSNKLWCHMEQYLNAVFEMDATKISNDKFKKIIKYLTNDNNGGDGDGDGDGDQIIQKYKDDNLKLIQLPKFIDSFSNAVNNPIFKNHPKKDQFKFEITEKVNQWIEEKKKEINENKIVIL</sequence>
<evidence type="ECO:0000255" key="1">
    <source>
        <dbReference type="PROSITE-ProRule" id="PRU00538"/>
    </source>
</evidence>
<evidence type="ECO:0000256" key="2">
    <source>
        <dbReference type="SAM" id="MobiDB-lite"/>
    </source>
</evidence>
<keyword id="KW-1185">Reference proteome</keyword>